<dbReference type="EC" id="5.3.1.16" evidence="1"/>
<dbReference type="EMBL" id="CP000124">
    <property type="protein sequence ID" value="ABA48864.1"/>
    <property type="molecule type" value="Genomic_DNA"/>
</dbReference>
<dbReference type="RefSeq" id="WP_004199906.1">
    <property type="nucleotide sequence ID" value="NC_007434.1"/>
</dbReference>
<dbReference type="SMR" id="Q3JN01"/>
<dbReference type="EnsemblBacteria" id="ABA48864">
    <property type="protein sequence ID" value="ABA48864"/>
    <property type="gene ID" value="BURPS1710b_3688"/>
</dbReference>
<dbReference type="GeneID" id="93061751"/>
<dbReference type="KEGG" id="bpm:BURPS1710b_3688"/>
<dbReference type="HOGENOM" id="CLU_048577_1_1_4"/>
<dbReference type="UniPathway" id="UPA00031">
    <property type="reaction ID" value="UER00009"/>
</dbReference>
<dbReference type="Proteomes" id="UP000002700">
    <property type="component" value="Chromosome I"/>
</dbReference>
<dbReference type="GO" id="GO:0005737">
    <property type="term" value="C:cytoplasm"/>
    <property type="evidence" value="ECO:0007669"/>
    <property type="project" value="UniProtKB-SubCell"/>
</dbReference>
<dbReference type="GO" id="GO:0003949">
    <property type="term" value="F:1-(5-phosphoribosyl)-5-[(5-phosphoribosylamino)methylideneamino]imidazole-4-carboxamide isomerase activity"/>
    <property type="evidence" value="ECO:0007669"/>
    <property type="project" value="UniProtKB-UniRule"/>
</dbReference>
<dbReference type="GO" id="GO:0000105">
    <property type="term" value="P:L-histidine biosynthetic process"/>
    <property type="evidence" value="ECO:0007669"/>
    <property type="project" value="UniProtKB-UniRule"/>
</dbReference>
<dbReference type="GO" id="GO:0000162">
    <property type="term" value="P:L-tryptophan biosynthetic process"/>
    <property type="evidence" value="ECO:0007669"/>
    <property type="project" value="TreeGrafter"/>
</dbReference>
<dbReference type="CDD" id="cd04732">
    <property type="entry name" value="HisA"/>
    <property type="match status" value="1"/>
</dbReference>
<dbReference type="FunFam" id="3.20.20.70:FF:000009">
    <property type="entry name" value="1-(5-phosphoribosyl)-5-[(5-phosphoribosylamino)methylideneamino] imidazole-4-carboxamide isomerase"/>
    <property type="match status" value="1"/>
</dbReference>
<dbReference type="Gene3D" id="3.20.20.70">
    <property type="entry name" value="Aldolase class I"/>
    <property type="match status" value="1"/>
</dbReference>
<dbReference type="HAMAP" id="MF_01014">
    <property type="entry name" value="HisA"/>
    <property type="match status" value="1"/>
</dbReference>
<dbReference type="InterPro" id="IPR013785">
    <property type="entry name" value="Aldolase_TIM"/>
</dbReference>
<dbReference type="InterPro" id="IPR006062">
    <property type="entry name" value="His_biosynth"/>
</dbReference>
<dbReference type="InterPro" id="IPR006063">
    <property type="entry name" value="HisA_bact_arch"/>
</dbReference>
<dbReference type="InterPro" id="IPR044524">
    <property type="entry name" value="Isoase_HisA-like"/>
</dbReference>
<dbReference type="InterPro" id="IPR023016">
    <property type="entry name" value="Isoase_HisA-like_bact"/>
</dbReference>
<dbReference type="InterPro" id="IPR011060">
    <property type="entry name" value="RibuloseP-bd_barrel"/>
</dbReference>
<dbReference type="NCBIfam" id="TIGR00007">
    <property type="entry name" value="1-(5-phosphoribosyl)-5-[(5-phosphoribosylamino)methylideneamino]imidazole-4-carboxamide isomerase"/>
    <property type="match status" value="1"/>
</dbReference>
<dbReference type="NCBIfam" id="NF010112">
    <property type="entry name" value="PRK13585.1"/>
    <property type="match status" value="1"/>
</dbReference>
<dbReference type="PANTHER" id="PTHR43090">
    <property type="entry name" value="1-(5-PHOSPHORIBOSYL)-5-[(5-PHOSPHORIBOSYLAMINO)METHYLIDENEAMINO] IMIDAZOLE-4-CARBOXAMIDE ISOMERASE"/>
    <property type="match status" value="1"/>
</dbReference>
<dbReference type="PANTHER" id="PTHR43090:SF2">
    <property type="entry name" value="1-(5-PHOSPHORIBOSYL)-5-[(5-PHOSPHORIBOSYLAMINO)METHYLIDENEAMINO] IMIDAZOLE-4-CARBOXAMIDE ISOMERASE"/>
    <property type="match status" value="1"/>
</dbReference>
<dbReference type="Pfam" id="PF00977">
    <property type="entry name" value="His_biosynth"/>
    <property type="match status" value="1"/>
</dbReference>
<dbReference type="SUPFAM" id="SSF51366">
    <property type="entry name" value="Ribulose-phoshate binding barrel"/>
    <property type="match status" value="1"/>
</dbReference>
<evidence type="ECO:0000255" key="1">
    <source>
        <dbReference type="HAMAP-Rule" id="MF_01014"/>
    </source>
</evidence>
<organism>
    <name type="scientific">Burkholderia pseudomallei (strain 1710b)</name>
    <dbReference type="NCBI Taxonomy" id="320372"/>
    <lineage>
        <taxon>Bacteria</taxon>
        <taxon>Pseudomonadati</taxon>
        <taxon>Pseudomonadota</taxon>
        <taxon>Betaproteobacteria</taxon>
        <taxon>Burkholderiales</taxon>
        <taxon>Burkholderiaceae</taxon>
        <taxon>Burkholderia</taxon>
        <taxon>pseudomallei group</taxon>
    </lineage>
</organism>
<name>HIS4_BURP1</name>
<feature type="chain" id="PRO_0000229046" description="1-(5-phosphoribosyl)-5-[(5-phosphoribosylamino)methylideneamino] imidazole-4-carboxamide isomerase">
    <location>
        <begin position="1"/>
        <end position="251"/>
    </location>
</feature>
<feature type="active site" description="Proton acceptor" evidence="1">
    <location>
        <position position="8"/>
    </location>
</feature>
<feature type="active site" description="Proton donor" evidence="1">
    <location>
        <position position="131"/>
    </location>
</feature>
<gene>
    <name evidence="1" type="primary">hisA</name>
    <name type="ordered locus">BURPS1710b_3688</name>
</gene>
<protein>
    <recommendedName>
        <fullName evidence="1">1-(5-phosphoribosyl)-5-[(5-phosphoribosylamino)methylideneamino] imidazole-4-carboxamide isomerase</fullName>
        <ecNumber evidence="1">5.3.1.16</ecNumber>
    </recommendedName>
    <alternativeName>
        <fullName evidence="1">Phosphoribosylformimino-5-aminoimidazole carboxamide ribotide isomerase</fullName>
    </alternativeName>
</protein>
<proteinExistence type="inferred from homology"/>
<comment type="catalytic activity">
    <reaction evidence="1">
        <text>1-(5-phospho-beta-D-ribosyl)-5-[(5-phospho-beta-D-ribosylamino)methylideneamino]imidazole-4-carboxamide = 5-[(5-phospho-1-deoxy-D-ribulos-1-ylimino)methylamino]-1-(5-phospho-beta-D-ribosyl)imidazole-4-carboxamide</text>
        <dbReference type="Rhea" id="RHEA:15469"/>
        <dbReference type="ChEBI" id="CHEBI:58435"/>
        <dbReference type="ChEBI" id="CHEBI:58525"/>
        <dbReference type="EC" id="5.3.1.16"/>
    </reaction>
</comment>
<comment type="pathway">
    <text evidence="1">Amino-acid biosynthesis; L-histidine biosynthesis; L-histidine from 5-phospho-alpha-D-ribose 1-diphosphate: step 4/9.</text>
</comment>
<comment type="subcellular location">
    <subcellularLocation>
        <location evidence="1">Cytoplasm</location>
    </subcellularLocation>
</comment>
<comment type="similarity">
    <text evidence="1">Belongs to the HisA/HisF family.</text>
</comment>
<sequence length="251" mass="26588">MLLIPAIDLKDGQCVRLKQGDMDQATIFSEDPAAMARKWVDLGARRLHLVDLNGAFAGKPKNLEAIEAILGEVGDEIPVQLGGGIRSLETIEKYLDAGLSYVIIGTAAVKDPGFLQDACSAFAGNIIVGLDAKDGKVATDGWSKLTGHEVIDLARKFEDYGVESIVYTDIGRDGMLQGINIEATVKLAQAVGIPVIASGGLSNIVDIEKLCEVEDEGIEGVICGRAIYSGDLDFAAAQKRADELNGELDDA</sequence>
<reference key="1">
    <citation type="journal article" date="2010" name="Genome Biol. Evol.">
        <title>Continuing evolution of Burkholderia mallei through genome reduction and large-scale rearrangements.</title>
        <authorList>
            <person name="Losada L."/>
            <person name="Ronning C.M."/>
            <person name="DeShazer D."/>
            <person name="Woods D."/>
            <person name="Fedorova N."/>
            <person name="Kim H.S."/>
            <person name="Shabalina S.A."/>
            <person name="Pearson T.R."/>
            <person name="Brinkac L."/>
            <person name="Tan P."/>
            <person name="Nandi T."/>
            <person name="Crabtree J."/>
            <person name="Badger J."/>
            <person name="Beckstrom-Sternberg S."/>
            <person name="Saqib M."/>
            <person name="Schutzer S.E."/>
            <person name="Keim P."/>
            <person name="Nierman W.C."/>
        </authorList>
    </citation>
    <scope>NUCLEOTIDE SEQUENCE [LARGE SCALE GENOMIC DNA]</scope>
    <source>
        <strain>1710b</strain>
    </source>
</reference>
<accession>Q3JN01</accession>
<keyword id="KW-0028">Amino-acid biosynthesis</keyword>
<keyword id="KW-0963">Cytoplasm</keyword>
<keyword id="KW-0368">Histidine biosynthesis</keyword>
<keyword id="KW-0413">Isomerase</keyword>